<proteinExistence type="evidence at protein level"/>
<name>DCDC2_RAT</name>
<reference key="1">
    <citation type="submission" date="2005-07" db="EMBL/GenBank/DDBJ databases">
        <authorList>
            <person name="Mural R.J."/>
            <person name="Adams M.D."/>
            <person name="Myers E.W."/>
            <person name="Smith H.O."/>
            <person name="Venter J.C."/>
        </authorList>
    </citation>
    <scope>NUCLEOTIDE SEQUENCE [LARGE SCALE GENOMIC DNA]</scope>
</reference>
<reference key="2">
    <citation type="journal article" date="2005" name="Proc. Natl. Acad. Sci. U.S.A.">
        <title>DCDC2 is associated with reading disability and modulates neuronal development in the brain.</title>
        <authorList>
            <person name="Meng H."/>
            <person name="Smith S.D."/>
            <person name="Hager K."/>
            <person name="Held M."/>
            <person name="Liu J."/>
            <person name="Olson R.K."/>
            <person name="Pennington B.F."/>
            <person name="DeFries J.C."/>
            <person name="Gelernter J."/>
            <person name="O'Reilly-Pol T."/>
            <person name="Somlo S."/>
            <person name="Skudlarski P."/>
            <person name="Shaywitz S.E."/>
            <person name="Shaywitz B.A."/>
            <person name="Marchione K."/>
            <person name="Wang Y."/>
            <person name="Paramasivam M."/>
            <person name="LoTurco J.J."/>
            <person name="Page G.P."/>
            <person name="Gruen J.R."/>
        </authorList>
    </citation>
    <scope>FUNCTION</scope>
</reference>
<reference key="3">
    <citation type="journal article" date="2012" name="Nat. Commun.">
        <title>Quantitative maps of protein phosphorylation sites across 14 different rat organs and tissues.</title>
        <authorList>
            <person name="Lundby A."/>
            <person name="Secher A."/>
            <person name="Lage K."/>
            <person name="Nordsborg N.B."/>
            <person name="Dmytriyev A."/>
            <person name="Lundby C."/>
            <person name="Olsen J.V."/>
        </authorList>
    </citation>
    <scope>PHOSPHORYLATION [LARGE SCALE ANALYSIS] AT SER-270</scope>
    <scope>IDENTIFICATION BY MASS SPECTROMETRY [LARGE SCALE ANALYSIS]</scope>
</reference>
<reference key="4">
    <citation type="journal article" date="2015" name="Hum. Mol. Genet.">
        <title>A missense mutation in DCDC2 causes human recessive deafness DFNB66, likely by interfering with sensory hair cell and supporting cell cilia length regulation.</title>
        <authorList>
            <person name="Grati M."/>
            <person name="Chakchouk I."/>
            <person name="Ma Q."/>
            <person name="Bensaid M."/>
            <person name="Desmidt A."/>
            <person name="Turki N."/>
            <person name="Yan D."/>
            <person name="Baanannou A."/>
            <person name="Mittal R."/>
            <person name="Driss N."/>
            <person name="Blanton S."/>
            <person name="Farooq A."/>
            <person name="Lu Z."/>
            <person name="Liu X.Z."/>
            <person name="Masmoudi S."/>
        </authorList>
    </citation>
    <scope>SUBCELLULAR LOCATION</scope>
    <scope>TISSUE SPECIFICITY</scope>
</reference>
<organism>
    <name type="scientific">Rattus norvegicus</name>
    <name type="common">Rat</name>
    <dbReference type="NCBI Taxonomy" id="10116"/>
    <lineage>
        <taxon>Eukaryota</taxon>
        <taxon>Metazoa</taxon>
        <taxon>Chordata</taxon>
        <taxon>Craniata</taxon>
        <taxon>Vertebrata</taxon>
        <taxon>Euteleostomi</taxon>
        <taxon>Mammalia</taxon>
        <taxon>Eutheria</taxon>
        <taxon>Euarchontoglires</taxon>
        <taxon>Glires</taxon>
        <taxon>Rodentia</taxon>
        <taxon>Myomorpha</taxon>
        <taxon>Muroidea</taxon>
        <taxon>Muridae</taxon>
        <taxon>Murinae</taxon>
        <taxon>Rattus</taxon>
    </lineage>
</organism>
<protein>
    <recommendedName>
        <fullName>Doublecortin domain-containing protein 2</fullName>
    </recommendedName>
</protein>
<sequence length="475" mass="52033">MNGPSPRSSHLSQPVVKSVLVYRNGDPFFAGRRVVIHEKKVSSFDIFLKEVTGGVQAPFGAVRNIYTPRTGHRIRKLDQIESGGNYVAGGQEAFKKLNYLDIGEIKKRPMEAVNTEVKPVIHSKINVSARFRKALHEPCTIFLIANGDLISPASRLLIPRKALNQWDHVLQMVTEKITLRSGAVHRLYTLEGKLVESGAELENGQFYVAVGRDKFKRLPYSELLFDKSAMRRPYGQKASSLPPMVGSRKSKGSGNYRQSKSTIGSSDNSSPQPLKRKGKKDSNSEKPTKVKQSVKSKNSHQAIPDNDEGIFKAGAERSETRGAAEVQEDEDTQVEVPVDQRPAEIVDEEEDGEKTSKDANQKDDFSAMNGEAEDRAGSKVADAPEEEEGIPDQGEKKASPSRVNGGTDEENGEELDQVTEELQPTVDEKGKAEGDNSAQDEAGLDAQRPPRPEVTVTSPQENEGNESNKASSAVA</sequence>
<accession>D3ZR10</accession>
<evidence type="ECO:0000250" key="1">
    <source>
        <dbReference type="UniProtKB" id="Q9UHG0"/>
    </source>
</evidence>
<evidence type="ECO:0000255" key="2">
    <source>
        <dbReference type="PROSITE-ProRule" id="PRU00072"/>
    </source>
</evidence>
<evidence type="ECO:0000256" key="3">
    <source>
        <dbReference type="SAM" id="MobiDB-lite"/>
    </source>
</evidence>
<evidence type="ECO:0000269" key="4">
    <source>
    </source>
</evidence>
<evidence type="ECO:0000269" key="5">
    <source>
    </source>
</evidence>
<evidence type="ECO:0007744" key="6">
    <source>
    </source>
</evidence>
<feature type="chain" id="PRO_0000403481" description="Doublecortin domain-containing protein 2">
    <location>
        <begin position="1"/>
        <end position="475"/>
    </location>
</feature>
<feature type="domain" description="Doublecortin 1" evidence="2">
    <location>
        <begin position="17"/>
        <end position="100"/>
    </location>
</feature>
<feature type="domain" description="Doublecortin 2" evidence="2">
    <location>
        <begin position="139"/>
        <end position="221"/>
    </location>
</feature>
<feature type="region of interest" description="Disordered" evidence="3">
    <location>
        <begin position="234"/>
        <end position="475"/>
    </location>
</feature>
<feature type="compositionally biased region" description="Polar residues" evidence="3">
    <location>
        <begin position="252"/>
        <end position="272"/>
    </location>
</feature>
<feature type="compositionally biased region" description="Basic and acidic residues" evidence="3">
    <location>
        <begin position="353"/>
        <end position="365"/>
    </location>
</feature>
<feature type="compositionally biased region" description="Acidic residues" evidence="3">
    <location>
        <begin position="407"/>
        <end position="419"/>
    </location>
</feature>
<feature type="compositionally biased region" description="Polar residues" evidence="3">
    <location>
        <begin position="455"/>
        <end position="475"/>
    </location>
</feature>
<feature type="modified residue" description="Phosphoserine" evidence="6">
    <location>
        <position position="270"/>
    </location>
</feature>
<dbReference type="EMBL" id="CH474064">
    <property type="protein sequence ID" value="EDL86488.1"/>
    <property type="molecule type" value="Genomic_DNA"/>
</dbReference>
<dbReference type="RefSeq" id="NP_001099580.2">
    <property type="nucleotide sequence ID" value="NM_001106110.2"/>
</dbReference>
<dbReference type="RefSeq" id="XP_038951437.1">
    <property type="nucleotide sequence ID" value="XM_039095509.2"/>
</dbReference>
<dbReference type="RefSeq" id="XP_038951438.1">
    <property type="nucleotide sequence ID" value="XM_039095510.2"/>
</dbReference>
<dbReference type="SMR" id="D3ZR10"/>
<dbReference type="CORUM" id="D3ZR10"/>
<dbReference type="FunCoup" id="D3ZR10">
    <property type="interactions" value="484"/>
</dbReference>
<dbReference type="STRING" id="10116.ENSRNOP00000060289"/>
<dbReference type="iPTMnet" id="D3ZR10"/>
<dbReference type="PhosphoSitePlus" id="D3ZR10"/>
<dbReference type="PaxDb" id="10116-ENSRNOP00000060289"/>
<dbReference type="Ensembl" id="ENSRNOT00000068021.2">
    <property type="protein sequence ID" value="ENSRNOP00000060289.1"/>
    <property type="gene ID" value="ENSRNOG00000017511.7"/>
</dbReference>
<dbReference type="GeneID" id="291130"/>
<dbReference type="KEGG" id="rno:291130"/>
<dbReference type="AGR" id="RGD:1310227"/>
<dbReference type="CTD" id="51473"/>
<dbReference type="RGD" id="1310227">
    <property type="gene designation" value="Dcdc2"/>
</dbReference>
<dbReference type="eggNOG" id="KOG3757">
    <property type="taxonomic scope" value="Eukaryota"/>
</dbReference>
<dbReference type="GeneTree" id="ENSGT00940000159377"/>
<dbReference type="HOGENOM" id="CLU_035041_3_0_1"/>
<dbReference type="InParanoid" id="D3ZR10"/>
<dbReference type="OMA" id="MHSRINV"/>
<dbReference type="OrthoDB" id="1738954at2759"/>
<dbReference type="PhylomeDB" id="D3ZR10"/>
<dbReference type="TreeFam" id="TF338406"/>
<dbReference type="PRO" id="PR:D3ZR10"/>
<dbReference type="Proteomes" id="UP000002494">
    <property type="component" value="Chromosome 17"/>
</dbReference>
<dbReference type="Proteomes" id="UP000234681">
    <property type="component" value="Chromosome 17"/>
</dbReference>
<dbReference type="Bgee" id="ENSRNOG00000017511">
    <property type="expression patterns" value="Expressed in testis and 12 other cell types or tissues"/>
</dbReference>
<dbReference type="GO" id="GO:0005930">
    <property type="term" value="C:axoneme"/>
    <property type="evidence" value="ECO:0000250"/>
    <property type="project" value="UniProtKB"/>
</dbReference>
<dbReference type="GO" id="GO:0005929">
    <property type="term" value="C:cilium"/>
    <property type="evidence" value="ECO:0000266"/>
    <property type="project" value="RGD"/>
</dbReference>
<dbReference type="GO" id="GO:0005737">
    <property type="term" value="C:cytoplasm"/>
    <property type="evidence" value="ECO:0000250"/>
    <property type="project" value="UniProtKB"/>
</dbReference>
<dbReference type="GO" id="GO:0060091">
    <property type="term" value="C:kinocilium"/>
    <property type="evidence" value="ECO:0000314"/>
    <property type="project" value="UniProtKB"/>
</dbReference>
<dbReference type="GO" id="GO:0005874">
    <property type="term" value="C:microtubule"/>
    <property type="evidence" value="ECO:0000318"/>
    <property type="project" value="GO_Central"/>
</dbReference>
<dbReference type="GO" id="GO:0005815">
    <property type="term" value="C:microtubule organizing center"/>
    <property type="evidence" value="ECO:0000318"/>
    <property type="project" value="GO_Central"/>
</dbReference>
<dbReference type="GO" id="GO:0045202">
    <property type="term" value="C:synapse"/>
    <property type="evidence" value="ECO:0007669"/>
    <property type="project" value="GOC"/>
</dbReference>
<dbReference type="GO" id="GO:0019894">
    <property type="term" value="F:kinesin binding"/>
    <property type="evidence" value="ECO:0000353"/>
    <property type="project" value="RGD"/>
</dbReference>
<dbReference type="GO" id="GO:0060271">
    <property type="term" value="P:cilium assembly"/>
    <property type="evidence" value="ECO:0000250"/>
    <property type="project" value="UniProtKB"/>
</dbReference>
<dbReference type="GO" id="GO:0048813">
    <property type="term" value="P:dendrite morphogenesis"/>
    <property type="evidence" value="ECO:0000266"/>
    <property type="project" value="RGD"/>
</dbReference>
<dbReference type="GO" id="GO:0035556">
    <property type="term" value="P:intracellular signal transduction"/>
    <property type="evidence" value="ECO:0007669"/>
    <property type="project" value="InterPro"/>
</dbReference>
<dbReference type="GO" id="GO:0001764">
    <property type="term" value="P:neuron migration"/>
    <property type="evidence" value="ECO:0000315"/>
    <property type="project" value="UniProtKB"/>
</dbReference>
<dbReference type="GO" id="GO:0019228">
    <property type="term" value="P:neuronal action potential"/>
    <property type="evidence" value="ECO:0000266"/>
    <property type="project" value="RGD"/>
</dbReference>
<dbReference type="GO" id="GO:0045880">
    <property type="term" value="P:positive regulation of smoothened signaling pathway"/>
    <property type="evidence" value="ECO:0000266"/>
    <property type="project" value="RGD"/>
</dbReference>
<dbReference type="GO" id="GO:1902017">
    <property type="term" value="P:regulation of cilium assembly"/>
    <property type="evidence" value="ECO:0000250"/>
    <property type="project" value="UniProtKB"/>
</dbReference>
<dbReference type="GO" id="GO:0030111">
    <property type="term" value="P:regulation of Wnt signaling pathway"/>
    <property type="evidence" value="ECO:0000250"/>
    <property type="project" value="UniProtKB"/>
</dbReference>
<dbReference type="GO" id="GO:0007605">
    <property type="term" value="P:sensory perception of sound"/>
    <property type="evidence" value="ECO:0000250"/>
    <property type="project" value="UniProtKB"/>
</dbReference>
<dbReference type="GO" id="GO:0035249">
    <property type="term" value="P:synaptic transmission, glutamatergic"/>
    <property type="evidence" value="ECO:0000266"/>
    <property type="project" value="RGD"/>
</dbReference>
<dbReference type="GO" id="GO:0008542">
    <property type="term" value="P:visual learning"/>
    <property type="evidence" value="ECO:0000266"/>
    <property type="project" value="RGD"/>
</dbReference>
<dbReference type="CDD" id="cd17152">
    <property type="entry name" value="DCX2_DCDC2"/>
    <property type="match status" value="1"/>
</dbReference>
<dbReference type="FunFam" id="3.10.20.230:FF:000004">
    <property type="entry name" value="Doublecortin domain containing 2"/>
    <property type="match status" value="1"/>
</dbReference>
<dbReference type="FunFam" id="3.10.20.230:FF:000005">
    <property type="entry name" value="Doublecortin domain containing 2"/>
    <property type="match status" value="1"/>
</dbReference>
<dbReference type="Gene3D" id="3.10.20.230">
    <property type="entry name" value="Doublecortin domain"/>
    <property type="match status" value="2"/>
</dbReference>
<dbReference type="InterPro" id="IPR033036">
    <property type="entry name" value="DCDC2_DCX_dom2"/>
</dbReference>
<dbReference type="InterPro" id="IPR003533">
    <property type="entry name" value="Doublecortin_dom"/>
</dbReference>
<dbReference type="InterPro" id="IPR036572">
    <property type="entry name" value="Doublecortin_dom_sf"/>
</dbReference>
<dbReference type="PANTHER" id="PTHR23004">
    <property type="entry name" value="DOUBLECORTIN DOMAIN CONTAINING 2"/>
    <property type="match status" value="1"/>
</dbReference>
<dbReference type="PANTHER" id="PTHR23004:SF5">
    <property type="entry name" value="DOUBLECORTIN DOMAIN-CONTAINING PROTEIN 2"/>
    <property type="match status" value="1"/>
</dbReference>
<dbReference type="Pfam" id="PF03607">
    <property type="entry name" value="DCX"/>
    <property type="match status" value="2"/>
</dbReference>
<dbReference type="SMART" id="SM00537">
    <property type="entry name" value="DCX"/>
    <property type="match status" value="2"/>
</dbReference>
<dbReference type="SUPFAM" id="SSF89837">
    <property type="entry name" value="Doublecortin (DC)"/>
    <property type="match status" value="2"/>
</dbReference>
<dbReference type="PROSITE" id="PS50309">
    <property type="entry name" value="DC"/>
    <property type="match status" value="2"/>
</dbReference>
<comment type="function">
    <text evidence="1 4">Protein that plays a role in the inhibition of canonical Wnt signaling pathway (By similarity). May be involved in neuronal migration during development of the cerebral neocortex (PubMed:16278297). Involved in the control of ciliogenesis and ciliary length (By similarity).</text>
</comment>
<comment type="subunit">
    <text evidence="1">Interacts with DVL1, DVL2 and DVL3.</text>
</comment>
<comment type="subcellular location">
    <subcellularLocation>
        <location evidence="1">Cell projection</location>
        <location evidence="1">Cilium</location>
    </subcellularLocation>
    <subcellularLocation>
        <location evidence="1">Cytoplasm</location>
        <location evidence="1">Cytoskeleton</location>
        <location evidence="1">Cilium axoneme</location>
    </subcellularLocation>
    <subcellularLocation>
        <location evidence="5">Cell projection</location>
        <location evidence="5">Kinocilium</location>
    </subcellularLocation>
    <subcellularLocation>
        <location evidence="5">Cytoplasm</location>
        <location evidence="5">Cytoskeleton</location>
    </subcellularLocation>
    <text evidence="1">Localizes to the ciliary axoneme and to mitotic spindle fibers in a cell-cycle-dependent manner.</text>
</comment>
<comment type="tissue specificity">
    <text evidence="5">Expressed in hair cells of the inner ear.</text>
</comment>
<keyword id="KW-0966">Cell projection</keyword>
<keyword id="KW-0970">Cilium biogenesis/degradation</keyword>
<keyword id="KW-0963">Cytoplasm</keyword>
<keyword id="KW-0206">Cytoskeleton</keyword>
<keyword id="KW-0524">Neurogenesis</keyword>
<keyword id="KW-0597">Phosphoprotein</keyword>
<keyword id="KW-1185">Reference proteome</keyword>
<keyword id="KW-0677">Repeat</keyword>
<gene>
    <name type="primary">Dcdc2</name>
</gene>